<accession>C0HLC0</accession>
<organism evidence="3">
    <name type="scientific">Phyllomedusa trinitatis</name>
    <name type="common">Trinidad leaf frog</name>
    <dbReference type="NCBI Taxonomy" id="332092"/>
    <lineage>
        <taxon>Eukaryota</taxon>
        <taxon>Metazoa</taxon>
        <taxon>Chordata</taxon>
        <taxon>Craniata</taxon>
        <taxon>Vertebrata</taxon>
        <taxon>Euteleostomi</taxon>
        <taxon>Amphibia</taxon>
        <taxon>Batrachia</taxon>
        <taxon>Anura</taxon>
        <taxon>Neobatrachia</taxon>
        <taxon>Hyloidea</taxon>
        <taxon>Hylidae</taxon>
        <taxon>Phyllomedusinae</taxon>
        <taxon>Phyllomedusa</taxon>
    </lineage>
</organism>
<reference evidence="4" key="1">
    <citation type="journal article" date="2018" name="Comp. Biochem. Physiol.">
        <title>Peptidomic analysis of the host-defense peptides in skin secretions of the Trinidadian leaf frog Phyllomedusa trinitatis (Phyllomedusidae).</title>
        <authorList>
            <person name="Mechkarska M."/>
            <person name="Coquet L."/>
            <person name="Leprince J."/>
            <person name="Auguste R.J."/>
            <person name="Jouenne T."/>
            <person name="Mangoni M.L."/>
            <person name="Conlon J.M."/>
        </authorList>
    </citation>
    <scope>PROTEIN SEQUENCE</scope>
    <scope>SUBCELLULAR LOCATION</scope>
    <scope>MASS SPECTROMETRY</scope>
    <scope>AMIDATION AT VAL-29</scope>
    <source>
        <tissue evidence="3">Skin secretion</tissue>
    </source>
</reference>
<name>DRS11_PHYTB</name>
<proteinExistence type="evidence at protein level"/>
<protein>
    <recommendedName>
        <fullName evidence="3">Dermaseptin-1.1TR</fullName>
    </recommendedName>
</protein>
<dbReference type="SMR" id="C0HLC0"/>
<dbReference type="GO" id="GO:0005576">
    <property type="term" value="C:extracellular region"/>
    <property type="evidence" value="ECO:0007669"/>
    <property type="project" value="UniProtKB-SubCell"/>
</dbReference>
<dbReference type="GO" id="GO:0006952">
    <property type="term" value="P:defense response"/>
    <property type="evidence" value="ECO:0007669"/>
    <property type="project" value="UniProtKB-KW"/>
</dbReference>
<dbReference type="InterPro" id="IPR022731">
    <property type="entry name" value="Dermaseptin_dom"/>
</dbReference>
<dbReference type="Pfam" id="PF12121">
    <property type="entry name" value="DD_K"/>
    <property type="match status" value="1"/>
</dbReference>
<keyword id="KW-0027">Amidation</keyword>
<keyword id="KW-0878">Amphibian defense peptide</keyword>
<keyword id="KW-0929">Antimicrobial</keyword>
<keyword id="KW-0903">Direct protein sequencing</keyword>
<keyword id="KW-0964">Secreted</keyword>
<comment type="function">
    <text evidence="1">Has antimicrobial activity.</text>
</comment>
<comment type="subcellular location">
    <subcellularLocation>
        <location evidence="2">Secreted</location>
    </subcellularLocation>
</comment>
<comment type="tissue specificity">
    <text evidence="5">Expressed by the skin glands.</text>
</comment>
<comment type="mass spectrometry" mass="2952.5" method="MALDI" evidence="2"/>
<comment type="similarity">
    <text evidence="4">Belongs to the frog skin active peptide (FSAP) family. Dermaseptin subfamily.</text>
</comment>
<evidence type="ECO:0000250" key="1">
    <source>
        <dbReference type="UniProtKB" id="P84921"/>
    </source>
</evidence>
<evidence type="ECO:0000269" key="2">
    <source>
    </source>
</evidence>
<evidence type="ECO:0000303" key="3">
    <source>
    </source>
</evidence>
<evidence type="ECO:0000305" key="4"/>
<evidence type="ECO:0000305" key="5">
    <source>
    </source>
</evidence>
<sequence length="29" mass="2954">GLWSKIKETGKEAAKAAGKAALNKIAEAV</sequence>
<feature type="peptide" id="PRO_0000445209" description="Dermaseptin-1.1TR" evidence="2">
    <location>
        <begin position="1"/>
        <end position="29"/>
    </location>
</feature>
<feature type="modified residue" description="Valine amide" evidence="2">
    <location>
        <position position="29"/>
    </location>
</feature>